<proteinExistence type="inferred from homology"/>
<protein>
    <recommendedName>
        <fullName evidence="1">Aspartyl/glutamyl-tRNA(Asn/Gln) amidotransferase subunit B</fullName>
        <shortName evidence="1">Asp/Glu-ADT subunit B</shortName>
        <ecNumber evidence="1">6.3.5.-</ecNumber>
    </recommendedName>
</protein>
<evidence type="ECO:0000255" key="1">
    <source>
        <dbReference type="HAMAP-Rule" id="MF_00121"/>
    </source>
</evidence>
<dbReference type="EC" id="6.3.5.-" evidence="1"/>
<dbReference type="EMBL" id="CP000916">
    <property type="protein sequence ID" value="ACM23475.1"/>
    <property type="molecule type" value="Genomic_DNA"/>
</dbReference>
<dbReference type="RefSeq" id="WP_015919773.1">
    <property type="nucleotide sequence ID" value="NC_011978.1"/>
</dbReference>
<dbReference type="SMR" id="B9K942"/>
<dbReference type="STRING" id="309803.CTN_1299"/>
<dbReference type="KEGG" id="tna:CTN_1299"/>
<dbReference type="eggNOG" id="COG0064">
    <property type="taxonomic scope" value="Bacteria"/>
</dbReference>
<dbReference type="HOGENOM" id="CLU_019240_0_0_0"/>
<dbReference type="Proteomes" id="UP000000445">
    <property type="component" value="Chromosome"/>
</dbReference>
<dbReference type="GO" id="GO:0050566">
    <property type="term" value="F:asparaginyl-tRNA synthase (glutamine-hydrolyzing) activity"/>
    <property type="evidence" value="ECO:0007669"/>
    <property type="project" value="RHEA"/>
</dbReference>
<dbReference type="GO" id="GO:0005524">
    <property type="term" value="F:ATP binding"/>
    <property type="evidence" value="ECO:0007669"/>
    <property type="project" value="UniProtKB-KW"/>
</dbReference>
<dbReference type="GO" id="GO:0050567">
    <property type="term" value="F:glutaminyl-tRNA synthase (glutamine-hydrolyzing) activity"/>
    <property type="evidence" value="ECO:0007669"/>
    <property type="project" value="UniProtKB-UniRule"/>
</dbReference>
<dbReference type="GO" id="GO:0070681">
    <property type="term" value="P:glutaminyl-tRNAGln biosynthesis via transamidation"/>
    <property type="evidence" value="ECO:0007669"/>
    <property type="project" value="TreeGrafter"/>
</dbReference>
<dbReference type="GO" id="GO:0006412">
    <property type="term" value="P:translation"/>
    <property type="evidence" value="ECO:0007669"/>
    <property type="project" value="UniProtKB-UniRule"/>
</dbReference>
<dbReference type="FunFam" id="1.10.10.410:FF:000001">
    <property type="entry name" value="Aspartyl/glutamyl-tRNA(Asn/Gln) amidotransferase subunit B"/>
    <property type="match status" value="1"/>
</dbReference>
<dbReference type="FunFam" id="1.10.150.380:FF:000001">
    <property type="entry name" value="Aspartyl/glutamyl-tRNA(Asn/Gln) amidotransferase subunit B"/>
    <property type="match status" value="1"/>
</dbReference>
<dbReference type="Gene3D" id="1.10.10.410">
    <property type="match status" value="1"/>
</dbReference>
<dbReference type="Gene3D" id="1.10.150.380">
    <property type="entry name" value="GatB domain, N-terminal subdomain"/>
    <property type="match status" value="1"/>
</dbReference>
<dbReference type="HAMAP" id="MF_00121">
    <property type="entry name" value="GatB"/>
    <property type="match status" value="1"/>
</dbReference>
<dbReference type="InterPro" id="IPR017959">
    <property type="entry name" value="Asn/Gln-tRNA_amidoTrfase_suB/E"/>
</dbReference>
<dbReference type="InterPro" id="IPR006075">
    <property type="entry name" value="Asn/Gln-tRNA_Trfase_suB/E_cat"/>
</dbReference>
<dbReference type="InterPro" id="IPR018027">
    <property type="entry name" value="Asn/Gln_amidotransferase"/>
</dbReference>
<dbReference type="InterPro" id="IPR003789">
    <property type="entry name" value="Asn/Gln_tRNA_amidoTrase-B-like"/>
</dbReference>
<dbReference type="InterPro" id="IPR004413">
    <property type="entry name" value="GatB"/>
</dbReference>
<dbReference type="InterPro" id="IPR042114">
    <property type="entry name" value="GatB_C_1"/>
</dbReference>
<dbReference type="InterPro" id="IPR023168">
    <property type="entry name" value="GatB_Yqey_C_2"/>
</dbReference>
<dbReference type="InterPro" id="IPR017958">
    <property type="entry name" value="Gln-tRNA_amidoTrfase_suB_CS"/>
</dbReference>
<dbReference type="InterPro" id="IPR014746">
    <property type="entry name" value="Gln_synth/guanido_kin_cat_dom"/>
</dbReference>
<dbReference type="NCBIfam" id="TIGR00133">
    <property type="entry name" value="gatB"/>
    <property type="match status" value="1"/>
</dbReference>
<dbReference type="NCBIfam" id="NF004012">
    <property type="entry name" value="PRK05477.1-2"/>
    <property type="match status" value="1"/>
</dbReference>
<dbReference type="NCBIfam" id="NF004014">
    <property type="entry name" value="PRK05477.1-4"/>
    <property type="match status" value="1"/>
</dbReference>
<dbReference type="PANTHER" id="PTHR11659">
    <property type="entry name" value="GLUTAMYL-TRNA GLN AMIDOTRANSFERASE SUBUNIT B MITOCHONDRIAL AND PROKARYOTIC PET112-RELATED"/>
    <property type="match status" value="1"/>
</dbReference>
<dbReference type="PANTHER" id="PTHR11659:SF0">
    <property type="entry name" value="GLUTAMYL-TRNA(GLN) AMIDOTRANSFERASE SUBUNIT B, MITOCHONDRIAL"/>
    <property type="match status" value="1"/>
</dbReference>
<dbReference type="Pfam" id="PF02934">
    <property type="entry name" value="GatB_N"/>
    <property type="match status" value="1"/>
</dbReference>
<dbReference type="Pfam" id="PF02637">
    <property type="entry name" value="GatB_Yqey"/>
    <property type="match status" value="1"/>
</dbReference>
<dbReference type="SMART" id="SM00845">
    <property type="entry name" value="GatB_Yqey"/>
    <property type="match status" value="1"/>
</dbReference>
<dbReference type="SUPFAM" id="SSF89095">
    <property type="entry name" value="GatB/YqeY motif"/>
    <property type="match status" value="1"/>
</dbReference>
<dbReference type="SUPFAM" id="SSF55931">
    <property type="entry name" value="Glutamine synthetase/guanido kinase"/>
    <property type="match status" value="1"/>
</dbReference>
<dbReference type="PROSITE" id="PS01234">
    <property type="entry name" value="GATB"/>
    <property type="match status" value="1"/>
</dbReference>
<sequence>MRYRPVIGLEIHVQLSTKTKAFCSCPADVFELPPNTAICPVCTGQPGALPVPNEEMIRFAVKTALALNCKIHKYSRFDRKNYFYPDLPKGYQISQYFYPIATEGFLEIDGDEGRKKVRIRRLHLEEDAGKLVHEGDSITRASYSLVDMNRCGVPLIEIVTEPDISSPREARVFMEKLRSIVRYLGVSTGDMEKGALRCDANISVVDTETGRQSNRVEVKNMNSFRFVEKALEYEFERIVKAMERGEDVERETRGWDMTTKTTVSMRGKEEESDYRYFPEPDIPPVVLSDEYLEEVKKELPELPDEKAKRFMREYDLPEYDAKVLTSSKELAEFFEECVKVVNRPKDLSNWIMTEVLRELNERNIEITESKLTPQHFADLFKLMDEGKISIKIAKEIFPEVFETGKMPSQIVEERGLVQINDEKLIEELVKKAMEQNPKAVEDYKAGKKKAAGFFVGFVMRETKGKANPELTNKIVQKLLEGE</sequence>
<organism>
    <name type="scientific">Thermotoga neapolitana (strain ATCC 49049 / DSM 4359 / NBRC 107923 / NS-E)</name>
    <dbReference type="NCBI Taxonomy" id="309803"/>
    <lineage>
        <taxon>Bacteria</taxon>
        <taxon>Thermotogati</taxon>
        <taxon>Thermotogota</taxon>
        <taxon>Thermotogae</taxon>
        <taxon>Thermotogales</taxon>
        <taxon>Thermotogaceae</taxon>
        <taxon>Thermotoga</taxon>
    </lineage>
</organism>
<name>GATB_THENN</name>
<comment type="function">
    <text evidence="1">Allows the formation of correctly charged Asn-tRNA(Asn) or Gln-tRNA(Gln) through the transamidation of misacylated Asp-tRNA(Asn) or Glu-tRNA(Gln) in organisms which lack either or both of asparaginyl-tRNA or glutaminyl-tRNA synthetases. The reaction takes place in the presence of glutamine and ATP through an activated phospho-Asp-tRNA(Asn) or phospho-Glu-tRNA(Gln).</text>
</comment>
<comment type="catalytic activity">
    <reaction evidence="1">
        <text>L-glutamyl-tRNA(Gln) + L-glutamine + ATP + H2O = L-glutaminyl-tRNA(Gln) + L-glutamate + ADP + phosphate + H(+)</text>
        <dbReference type="Rhea" id="RHEA:17521"/>
        <dbReference type="Rhea" id="RHEA-COMP:9681"/>
        <dbReference type="Rhea" id="RHEA-COMP:9684"/>
        <dbReference type="ChEBI" id="CHEBI:15377"/>
        <dbReference type="ChEBI" id="CHEBI:15378"/>
        <dbReference type="ChEBI" id="CHEBI:29985"/>
        <dbReference type="ChEBI" id="CHEBI:30616"/>
        <dbReference type="ChEBI" id="CHEBI:43474"/>
        <dbReference type="ChEBI" id="CHEBI:58359"/>
        <dbReference type="ChEBI" id="CHEBI:78520"/>
        <dbReference type="ChEBI" id="CHEBI:78521"/>
        <dbReference type="ChEBI" id="CHEBI:456216"/>
    </reaction>
</comment>
<comment type="catalytic activity">
    <reaction evidence="1">
        <text>L-aspartyl-tRNA(Asn) + L-glutamine + ATP + H2O = L-asparaginyl-tRNA(Asn) + L-glutamate + ADP + phosphate + 2 H(+)</text>
        <dbReference type="Rhea" id="RHEA:14513"/>
        <dbReference type="Rhea" id="RHEA-COMP:9674"/>
        <dbReference type="Rhea" id="RHEA-COMP:9677"/>
        <dbReference type="ChEBI" id="CHEBI:15377"/>
        <dbReference type="ChEBI" id="CHEBI:15378"/>
        <dbReference type="ChEBI" id="CHEBI:29985"/>
        <dbReference type="ChEBI" id="CHEBI:30616"/>
        <dbReference type="ChEBI" id="CHEBI:43474"/>
        <dbReference type="ChEBI" id="CHEBI:58359"/>
        <dbReference type="ChEBI" id="CHEBI:78515"/>
        <dbReference type="ChEBI" id="CHEBI:78516"/>
        <dbReference type="ChEBI" id="CHEBI:456216"/>
    </reaction>
</comment>
<comment type="subunit">
    <text evidence="1">Heterotrimer of A, B and C subunits.</text>
</comment>
<comment type="similarity">
    <text evidence="1">Belongs to the GatB/GatE family. GatB subfamily.</text>
</comment>
<keyword id="KW-0067">ATP-binding</keyword>
<keyword id="KW-0436">Ligase</keyword>
<keyword id="KW-0547">Nucleotide-binding</keyword>
<keyword id="KW-0648">Protein biosynthesis</keyword>
<gene>
    <name evidence="1" type="primary">gatB</name>
    <name type="ordered locus">CTN_1299</name>
</gene>
<reference key="1">
    <citation type="submission" date="2007-11" db="EMBL/GenBank/DDBJ databases">
        <title>The genome sequence of the hyperthermophilic bacterium Thermotoga neapolitana.</title>
        <authorList>
            <person name="Lim S.K."/>
            <person name="Kim J.S."/>
            <person name="Cha S.H."/>
            <person name="Park B.C."/>
            <person name="Lee D.S."/>
            <person name="Tae H.S."/>
            <person name="Kim S.-J."/>
            <person name="Kim J.J."/>
            <person name="Park K.J."/>
            <person name="Lee S.Y."/>
        </authorList>
    </citation>
    <scope>NUCLEOTIDE SEQUENCE [LARGE SCALE GENOMIC DNA]</scope>
    <source>
        <strain>ATCC 49049 / DSM 4359 / NBRC 107923 / NS-E</strain>
    </source>
</reference>
<accession>B9K942</accession>
<feature type="chain" id="PRO_1000122542" description="Aspartyl/glutamyl-tRNA(Asn/Gln) amidotransferase subunit B">
    <location>
        <begin position="1"/>
        <end position="482"/>
    </location>
</feature>